<protein>
    <recommendedName>
        <fullName evidence="1">Guanylate kinase</fullName>
        <ecNumber evidence="1">2.7.4.8</ecNumber>
    </recommendedName>
    <alternativeName>
        <fullName evidence="1">GMP kinase</fullName>
    </alternativeName>
</protein>
<gene>
    <name evidence="1" type="primary">gmk</name>
    <name type="ordered locus">SSON_3757</name>
</gene>
<feature type="chain" id="PRO_0000266402" description="Guanylate kinase">
    <location>
        <begin position="1"/>
        <end position="207"/>
    </location>
</feature>
<feature type="domain" description="Guanylate kinase-like" evidence="1">
    <location>
        <begin position="4"/>
        <end position="184"/>
    </location>
</feature>
<feature type="binding site" evidence="1">
    <location>
        <begin position="11"/>
        <end position="18"/>
    </location>
    <ligand>
        <name>ATP</name>
        <dbReference type="ChEBI" id="CHEBI:30616"/>
    </ligand>
</feature>
<organism>
    <name type="scientific">Shigella sonnei (strain Ss046)</name>
    <dbReference type="NCBI Taxonomy" id="300269"/>
    <lineage>
        <taxon>Bacteria</taxon>
        <taxon>Pseudomonadati</taxon>
        <taxon>Pseudomonadota</taxon>
        <taxon>Gammaproteobacteria</taxon>
        <taxon>Enterobacterales</taxon>
        <taxon>Enterobacteriaceae</taxon>
        <taxon>Shigella</taxon>
    </lineage>
</organism>
<sequence length="207" mass="23593">MAQGTLYIVSAPSGAGKSSLIQALLKTQPLYDTQVSVSHTTRQPRPGEVHGEHYFFVNHDEFKEMISRDAFLEHAEVFGNYYGTSREAIEQVLATGVDVFLDIDWQGAQQIRQKMPHARSIFILPPSKIELDRRLRGRGQDSEEVIAKRMAQAVAEMSHYAEYDYLIVNDDFDTALTDLKTIIRAERLRMSRQKQRHDALISKLLAD</sequence>
<name>KGUA_SHISS</name>
<evidence type="ECO:0000255" key="1">
    <source>
        <dbReference type="HAMAP-Rule" id="MF_00328"/>
    </source>
</evidence>
<comment type="function">
    <text evidence="1">Essential for recycling GMP and indirectly, cGMP.</text>
</comment>
<comment type="catalytic activity">
    <reaction evidence="1">
        <text>GMP + ATP = GDP + ADP</text>
        <dbReference type="Rhea" id="RHEA:20780"/>
        <dbReference type="ChEBI" id="CHEBI:30616"/>
        <dbReference type="ChEBI" id="CHEBI:58115"/>
        <dbReference type="ChEBI" id="CHEBI:58189"/>
        <dbReference type="ChEBI" id="CHEBI:456216"/>
        <dbReference type="EC" id="2.7.4.8"/>
    </reaction>
</comment>
<comment type="subcellular location">
    <subcellularLocation>
        <location evidence="1">Cytoplasm</location>
    </subcellularLocation>
</comment>
<comment type="similarity">
    <text evidence="1">Belongs to the guanylate kinase family.</text>
</comment>
<dbReference type="EC" id="2.7.4.8" evidence="1"/>
<dbReference type="EMBL" id="CP000038">
    <property type="protein sequence ID" value="AAZ90301.1"/>
    <property type="molecule type" value="Genomic_DNA"/>
</dbReference>
<dbReference type="RefSeq" id="WP_001295237.1">
    <property type="nucleotide sequence ID" value="NC_007384.1"/>
</dbReference>
<dbReference type="SMR" id="Q3YW11"/>
<dbReference type="GeneID" id="93778363"/>
<dbReference type="KEGG" id="ssn:SSON_3757"/>
<dbReference type="HOGENOM" id="CLU_001715_1_0_6"/>
<dbReference type="Proteomes" id="UP000002529">
    <property type="component" value="Chromosome"/>
</dbReference>
<dbReference type="GO" id="GO:0005829">
    <property type="term" value="C:cytosol"/>
    <property type="evidence" value="ECO:0007669"/>
    <property type="project" value="TreeGrafter"/>
</dbReference>
<dbReference type="GO" id="GO:0005524">
    <property type="term" value="F:ATP binding"/>
    <property type="evidence" value="ECO:0007669"/>
    <property type="project" value="UniProtKB-UniRule"/>
</dbReference>
<dbReference type="GO" id="GO:0004385">
    <property type="term" value="F:guanylate kinase activity"/>
    <property type="evidence" value="ECO:0007669"/>
    <property type="project" value="UniProtKB-UniRule"/>
</dbReference>
<dbReference type="CDD" id="cd00071">
    <property type="entry name" value="GMPK"/>
    <property type="match status" value="1"/>
</dbReference>
<dbReference type="FunFam" id="3.40.50.300:FF:000084">
    <property type="entry name" value="Guanylate kinase"/>
    <property type="match status" value="1"/>
</dbReference>
<dbReference type="FunFam" id="3.30.63.10:FF:000002">
    <property type="entry name" value="Guanylate kinase 1"/>
    <property type="match status" value="1"/>
</dbReference>
<dbReference type="Gene3D" id="3.30.63.10">
    <property type="entry name" value="Guanylate Kinase phosphate binding domain"/>
    <property type="match status" value="1"/>
</dbReference>
<dbReference type="Gene3D" id="3.40.50.300">
    <property type="entry name" value="P-loop containing nucleotide triphosphate hydrolases"/>
    <property type="match status" value="1"/>
</dbReference>
<dbReference type="HAMAP" id="MF_00328">
    <property type="entry name" value="Guanylate_kinase"/>
    <property type="match status" value="1"/>
</dbReference>
<dbReference type="InterPro" id="IPR008145">
    <property type="entry name" value="GK/Ca_channel_bsu"/>
</dbReference>
<dbReference type="InterPro" id="IPR008144">
    <property type="entry name" value="Guanylate_kin-like_dom"/>
</dbReference>
<dbReference type="InterPro" id="IPR017665">
    <property type="entry name" value="Guanylate_kinase"/>
</dbReference>
<dbReference type="InterPro" id="IPR020590">
    <property type="entry name" value="Guanylate_kinase_CS"/>
</dbReference>
<dbReference type="InterPro" id="IPR027417">
    <property type="entry name" value="P-loop_NTPase"/>
</dbReference>
<dbReference type="NCBIfam" id="TIGR03263">
    <property type="entry name" value="guanyl_kin"/>
    <property type="match status" value="1"/>
</dbReference>
<dbReference type="PANTHER" id="PTHR23117:SF13">
    <property type="entry name" value="GUANYLATE KINASE"/>
    <property type="match status" value="1"/>
</dbReference>
<dbReference type="PANTHER" id="PTHR23117">
    <property type="entry name" value="GUANYLATE KINASE-RELATED"/>
    <property type="match status" value="1"/>
</dbReference>
<dbReference type="Pfam" id="PF00625">
    <property type="entry name" value="Guanylate_kin"/>
    <property type="match status" value="1"/>
</dbReference>
<dbReference type="SMART" id="SM00072">
    <property type="entry name" value="GuKc"/>
    <property type="match status" value="1"/>
</dbReference>
<dbReference type="SUPFAM" id="SSF52540">
    <property type="entry name" value="P-loop containing nucleoside triphosphate hydrolases"/>
    <property type="match status" value="1"/>
</dbReference>
<dbReference type="PROSITE" id="PS00856">
    <property type="entry name" value="GUANYLATE_KINASE_1"/>
    <property type="match status" value="1"/>
</dbReference>
<dbReference type="PROSITE" id="PS50052">
    <property type="entry name" value="GUANYLATE_KINASE_2"/>
    <property type="match status" value="1"/>
</dbReference>
<reference key="1">
    <citation type="journal article" date="2005" name="Nucleic Acids Res.">
        <title>Genome dynamics and diversity of Shigella species, the etiologic agents of bacillary dysentery.</title>
        <authorList>
            <person name="Yang F."/>
            <person name="Yang J."/>
            <person name="Zhang X."/>
            <person name="Chen L."/>
            <person name="Jiang Y."/>
            <person name="Yan Y."/>
            <person name="Tang X."/>
            <person name="Wang J."/>
            <person name="Xiong Z."/>
            <person name="Dong J."/>
            <person name="Xue Y."/>
            <person name="Zhu Y."/>
            <person name="Xu X."/>
            <person name="Sun L."/>
            <person name="Chen S."/>
            <person name="Nie H."/>
            <person name="Peng J."/>
            <person name="Xu J."/>
            <person name="Wang Y."/>
            <person name="Yuan Z."/>
            <person name="Wen Y."/>
            <person name="Yao Z."/>
            <person name="Shen Y."/>
            <person name="Qiang B."/>
            <person name="Hou Y."/>
            <person name="Yu J."/>
            <person name="Jin Q."/>
        </authorList>
    </citation>
    <scope>NUCLEOTIDE SEQUENCE [LARGE SCALE GENOMIC DNA]</scope>
    <source>
        <strain>Ss046</strain>
    </source>
</reference>
<accession>Q3YW11</accession>
<keyword id="KW-0067">ATP-binding</keyword>
<keyword id="KW-0963">Cytoplasm</keyword>
<keyword id="KW-0418">Kinase</keyword>
<keyword id="KW-0547">Nucleotide-binding</keyword>
<keyword id="KW-1185">Reference proteome</keyword>
<keyword id="KW-0808">Transferase</keyword>
<proteinExistence type="inferred from homology"/>